<evidence type="ECO:0000250" key="1">
    <source>
        <dbReference type="UniProtKB" id="Q58F21"/>
    </source>
</evidence>
<evidence type="ECO:0000250" key="2">
    <source>
        <dbReference type="UniProtKB" id="Q91Y44"/>
    </source>
</evidence>
<evidence type="ECO:0000255" key="3"/>
<evidence type="ECO:0000255" key="4">
    <source>
        <dbReference type="PROSITE-ProRule" id="PRU00035"/>
    </source>
</evidence>
<evidence type="ECO:0000255" key="5">
    <source>
        <dbReference type="PROSITE-ProRule" id="PRU00857"/>
    </source>
</evidence>
<evidence type="ECO:0000256" key="6">
    <source>
        <dbReference type="SAM" id="MobiDB-lite"/>
    </source>
</evidence>
<evidence type="ECO:0000269" key="7">
    <source>
    </source>
</evidence>
<evidence type="ECO:0000305" key="8"/>
<dbReference type="SMR" id="D4A7T3"/>
<dbReference type="FunCoup" id="D4A7T3">
    <property type="interactions" value="438"/>
</dbReference>
<dbReference type="STRING" id="10116.ENSRNOP00000072964"/>
<dbReference type="iPTMnet" id="D4A7T3"/>
<dbReference type="PhosphoSitePlus" id="D4A7T3"/>
<dbReference type="PaxDb" id="10116-ENSRNOP00000058256"/>
<dbReference type="PeptideAtlas" id="D4A7T3"/>
<dbReference type="AGR" id="RGD:1306678"/>
<dbReference type="RGD" id="1306678">
    <property type="gene designation" value="Brdt"/>
</dbReference>
<dbReference type="eggNOG" id="KOG1474">
    <property type="taxonomic scope" value="Eukaryota"/>
</dbReference>
<dbReference type="InParanoid" id="D4A7T3"/>
<dbReference type="TreeFam" id="TF317345"/>
<dbReference type="PRO" id="PR:D4A7T3"/>
<dbReference type="Proteomes" id="UP000002494">
    <property type="component" value="Unplaced"/>
</dbReference>
<dbReference type="GO" id="GO:0000785">
    <property type="term" value="C:chromatin"/>
    <property type="evidence" value="ECO:0000318"/>
    <property type="project" value="GO_Central"/>
</dbReference>
<dbReference type="GO" id="GO:0005634">
    <property type="term" value="C:nucleus"/>
    <property type="evidence" value="ECO:0000250"/>
    <property type="project" value="UniProtKB"/>
</dbReference>
<dbReference type="GO" id="GO:0042393">
    <property type="term" value="F:histone binding"/>
    <property type="evidence" value="ECO:0000266"/>
    <property type="project" value="RGD"/>
</dbReference>
<dbReference type="GO" id="GO:0140566">
    <property type="term" value="F:histone reader activity"/>
    <property type="evidence" value="ECO:0000266"/>
    <property type="project" value="RGD"/>
</dbReference>
<dbReference type="GO" id="GO:0070577">
    <property type="term" value="F:lysine-acetylated histone binding"/>
    <property type="evidence" value="ECO:0000266"/>
    <property type="project" value="RGD"/>
</dbReference>
<dbReference type="GO" id="GO:0006338">
    <property type="term" value="P:chromatin remodeling"/>
    <property type="evidence" value="ECO:0000314"/>
    <property type="project" value="RGD"/>
</dbReference>
<dbReference type="GO" id="GO:0007141">
    <property type="term" value="P:male meiosis I"/>
    <property type="evidence" value="ECO:0000250"/>
    <property type="project" value="UniProtKB"/>
</dbReference>
<dbReference type="GO" id="GO:0007140">
    <property type="term" value="P:male meiotic nuclear division"/>
    <property type="evidence" value="ECO:0000250"/>
    <property type="project" value="UniProtKB"/>
</dbReference>
<dbReference type="GO" id="GO:0006397">
    <property type="term" value="P:mRNA processing"/>
    <property type="evidence" value="ECO:0007669"/>
    <property type="project" value="UniProtKB-KW"/>
</dbReference>
<dbReference type="GO" id="GO:0010628">
    <property type="term" value="P:positive regulation of gene expression"/>
    <property type="evidence" value="ECO:0000250"/>
    <property type="project" value="UniProtKB"/>
</dbReference>
<dbReference type="GO" id="GO:0006355">
    <property type="term" value="P:regulation of DNA-templated transcription"/>
    <property type="evidence" value="ECO:0000266"/>
    <property type="project" value="RGD"/>
</dbReference>
<dbReference type="GO" id="GO:0043484">
    <property type="term" value="P:regulation of RNA splicing"/>
    <property type="evidence" value="ECO:0000250"/>
    <property type="project" value="UniProtKB"/>
</dbReference>
<dbReference type="GO" id="GO:0008380">
    <property type="term" value="P:RNA splicing"/>
    <property type="evidence" value="ECO:0007669"/>
    <property type="project" value="UniProtKB-KW"/>
</dbReference>
<dbReference type="GO" id="GO:0035092">
    <property type="term" value="P:sperm DNA condensation"/>
    <property type="evidence" value="ECO:0000250"/>
    <property type="project" value="UniProtKB"/>
</dbReference>
<dbReference type="GO" id="GO:0007283">
    <property type="term" value="P:spermatogenesis"/>
    <property type="evidence" value="ECO:0000270"/>
    <property type="project" value="RGD"/>
</dbReference>
<dbReference type="CDD" id="cd05497">
    <property type="entry name" value="Bromo_Brdt_I_like"/>
    <property type="match status" value="1"/>
</dbReference>
<dbReference type="CDD" id="cd05498">
    <property type="entry name" value="Bromo_Brdt_II_like"/>
    <property type="match status" value="1"/>
</dbReference>
<dbReference type="FunFam" id="1.20.920.10:FF:000003">
    <property type="entry name" value="Bromodomain-containing protein 2"/>
    <property type="match status" value="1"/>
</dbReference>
<dbReference type="FunFam" id="1.20.1270.220:FF:000001">
    <property type="entry name" value="bromodomain-containing protein 2 isoform X1"/>
    <property type="match status" value="1"/>
</dbReference>
<dbReference type="FunFam" id="1.20.920.10:FF:000002">
    <property type="entry name" value="Bromodomain-containing protein 4"/>
    <property type="match status" value="1"/>
</dbReference>
<dbReference type="Gene3D" id="1.20.1270.220">
    <property type="match status" value="1"/>
</dbReference>
<dbReference type="Gene3D" id="1.20.920.10">
    <property type="entry name" value="Bromodomain-like"/>
    <property type="match status" value="2"/>
</dbReference>
<dbReference type="InterPro" id="IPR031354">
    <property type="entry name" value="BRD4_CDT"/>
</dbReference>
<dbReference type="InterPro" id="IPR043508">
    <property type="entry name" value="Bromo_Brdt_I"/>
</dbReference>
<dbReference type="InterPro" id="IPR043509">
    <property type="entry name" value="Bromo_Brdt_II"/>
</dbReference>
<dbReference type="InterPro" id="IPR050935">
    <property type="entry name" value="Bromo_chromatin_reader"/>
</dbReference>
<dbReference type="InterPro" id="IPR001487">
    <property type="entry name" value="Bromodomain"/>
</dbReference>
<dbReference type="InterPro" id="IPR036427">
    <property type="entry name" value="Bromodomain-like_sf"/>
</dbReference>
<dbReference type="InterPro" id="IPR018359">
    <property type="entry name" value="Bromodomain_CS"/>
</dbReference>
<dbReference type="InterPro" id="IPR027353">
    <property type="entry name" value="NET_dom"/>
</dbReference>
<dbReference type="InterPro" id="IPR038336">
    <property type="entry name" value="NET_sf"/>
</dbReference>
<dbReference type="PANTHER" id="PTHR22880:SF175">
    <property type="entry name" value="BROMODOMAIN TESTIS-SPECIFIC PROTEIN"/>
    <property type="match status" value="1"/>
</dbReference>
<dbReference type="PANTHER" id="PTHR22880">
    <property type="entry name" value="FALZ-RELATED BROMODOMAIN-CONTAINING PROTEINS"/>
    <property type="match status" value="1"/>
</dbReference>
<dbReference type="Pfam" id="PF17035">
    <property type="entry name" value="BET"/>
    <property type="match status" value="1"/>
</dbReference>
<dbReference type="Pfam" id="PF17105">
    <property type="entry name" value="BRD4_CDT"/>
    <property type="match status" value="1"/>
</dbReference>
<dbReference type="Pfam" id="PF00439">
    <property type="entry name" value="Bromodomain"/>
    <property type="match status" value="2"/>
</dbReference>
<dbReference type="PRINTS" id="PR00503">
    <property type="entry name" value="BROMODOMAIN"/>
</dbReference>
<dbReference type="SMART" id="SM00297">
    <property type="entry name" value="BROMO"/>
    <property type="match status" value="2"/>
</dbReference>
<dbReference type="SUPFAM" id="SSF47370">
    <property type="entry name" value="Bromodomain"/>
    <property type="match status" value="2"/>
</dbReference>
<dbReference type="PROSITE" id="PS00633">
    <property type="entry name" value="BROMODOMAIN_1"/>
    <property type="match status" value="2"/>
</dbReference>
<dbReference type="PROSITE" id="PS50014">
    <property type="entry name" value="BROMODOMAIN_2"/>
    <property type="match status" value="2"/>
</dbReference>
<dbReference type="PROSITE" id="PS51525">
    <property type="entry name" value="NET"/>
    <property type="match status" value="1"/>
</dbReference>
<accession>D4A7T3</accession>
<proteinExistence type="evidence at protein level"/>
<sequence length="952" mass="106719">MSLPSRQMAIVNPPPPEYINAKKTGRLTNQLQFLQRVVLKALWKHSFSWPFQQPVDAAKLKLPDYYTIIETPMDLSTIKKRLENRYYEKASECVGDFNTMFSNCYLYNKPGDDIVVMAQALEKLFMQKLSQMPQEEQIVGGKERMKKDIQQKTAVSSAKEQTPSKSAENVFKRQEIPAGFPDVCLSPLNMAQEAPPTCDSQTVVQITKGVKRRADTTTPTTSSAKASSESPPPLREAKPANAPVKENTVKSVLPDSQQQHRVLKTVKVTEQLKHCSEILKEMLAKKHLPYAWPFYNPVDVDALGLHNYYDIVKNPMDLGTIKGKMDKQEYKDACEFAADVRLMFMNCYKYNPPDHEVVTMARMLQDVFEMHFAKIPDEPVESMRACHLTTNSAKALSRESSSEASSGDCSSEDSEDERVQRLAKLQEQLNAVHQQLQVLSQVPLRKLKKKNEKSKRAPKRKKVNRDENPKKKAKQMKQKEKAKSNQPKKKKPLLKLEEEDNAKPMNYDEKRQLSLDINKLPGDKLGRIVHIIQSREPSLRNSNPDEIEIDFETLKASTLRELEKYVLACLRKRSLKPHAKKVVRSKEELHSEKKLELERRLLDVNNQLNCRKRQTKRPAKVAVSPRPPLPPPPPPPPELASGSRLSDSSSSSSSSGSGSSSSSSSSSGSGSSSSDSSSSDSSDSEPEISPKFTGVKQNDLPSKENTKQIQCSVPDITSAETALVQQSTGPCGAPGKPPQQMPGCQVPHHLQATESTASVQTQPLAGDCKRVLHGPPVVHASAESHTVLELQCHAPVQKDIKIKNADSWKSLGKPVKASSVLKSSDELFNQFRKAAIEKEVKARTQEQIRKHLEHSAKDPKVSQESQREFGSGFTPESSSNKVQGRSHGEEQSEQQQLPSPSETQDISKLWLLKDRNLAREKEQERRRREAMAGTIDMTLQSDIMTMFENNFD</sequence>
<feature type="chain" id="PRO_0000420474" description="Bromodomain testis-specific protein">
    <location>
        <begin position="1"/>
        <end position="952"/>
    </location>
</feature>
<feature type="domain" description="Bromo 1" evidence="4">
    <location>
        <begin position="26"/>
        <end position="132"/>
    </location>
</feature>
<feature type="domain" description="Bromo 2" evidence="4">
    <location>
        <begin position="266"/>
        <end position="375"/>
    </location>
</feature>
<feature type="domain" description="NET" evidence="5">
    <location>
        <begin position="495"/>
        <end position="577"/>
    </location>
</feature>
<feature type="region of interest" description="Disordered" evidence="6">
    <location>
        <begin position="141"/>
        <end position="168"/>
    </location>
</feature>
<feature type="region of interest" description="Disordered" evidence="6">
    <location>
        <begin position="209"/>
        <end position="257"/>
    </location>
</feature>
<feature type="region of interest" description="Disordered" evidence="6">
    <location>
        <begin position="392"/>
        <end position="420"/>
    </location>
</feature>
<feature type="region of interest" description="Disordered" evidence="6">
    <location>
        <begin position="442"/>
        <end position="504"/>
    </location>
</feature>
<feature type="region of interest" description="Disordered" evidence="6">
    <location>
        <begin position="607"/>
        <end position="746"/>
    </location>
</feature>
<feature type="region of interest" description="Disordered" evidence="6">
    <location>
        <begin position="850"/>
        <end position="930"/>
    </location>
</feature>
<feature type="coiled-coil region" evidence="3">
    <location>
        <begin position="417"/>
        <end position="442"/>
    </location>
</feature>
<feature type="coiled-coil region" evidence="3">
    <location>
        <begin position="837"/>
        <end position="936"/>
    </location>
</feature>
<feature type="short sequence motif" description="Nuclear localization signal" evidence="1">
    <location>
        <begin position="208"/>
        <end position="219"/>
    </location>
</feature>
<feature type="compositionally biased region" description="Basic and acidic residues" evidence="6">
    <location>
        <begin position="141"/>
        <end position="150"/>
    </location>
</feature>
<feature type="compositionally biased region" description="Polar residues" evidence="6">
    <location>
        <begin position="151"/>
        <end position="167"/>
    </location>
</feature>
<feature type="compositionally biased region" description="Low complexity" evidence="6">
    <location>
        <begin position="216"/>
        <end position="229"/>
    </location>
</feature>
<feature type="compositionally biased region" description="Basic residues" evidence="6">
    <location>
        <begin position="445"/>
        <end position="463"/>
    </location>
</feature>
<feature type="compositionally biased region" description="Basic residues" evidence="6">
    <location>
        <begin position="610"/>
        <end position="619"/>
    </location>
</feature>
<feature type="compositionally biased region" description="Pro residues" evidence="6">
    <location>
        <begin position="625"/>
        <end position="638"/>
    </location>
</feature>
<feature type="compositionally biased region" description="Low complexity" evidence="6">
    <location>
        <begin position="646"/>
        <end position="681"/>
    </location>
</feature>
<feature type="compositionally biased region" description="Polar residues" evidence="6">
    <location>
        <begin position="718"/>
        <end position="729"/>
    </location>
</feature>
<feature type="compositionally biased region" description="Basic and acidic residues" evidence="6">
    <location>
        <begin position="850"/>
        <end position="867"/>
    </location>
</feature>
<feature type="compositionally biased region" description="Polar residues" evidence="6">
    <location>
        <begin position="874"/>
        <end position="883"/>
    </location>
</feature>
<feature type="compositionally biased region" description="Low complexity" evidence="6">
    <location>
        <begin position="893"/>
        <end position="902"/>
    </location>
</feature>
<feature type="compositionally biased region" description="Basic and acidic residues" evidence="6">
    <location>
        <begin position="911"/>
        <end position="930"/>
    </location>
</feature>
<feature type="site" description="Histone H4K5ac binding" evidence="2">
    <location>
        <position position="108"/>
    </location>
</feature>
<feature type="site" description="Histone H4K5ac binding" evidence="2">
    <location>
        <position position="113"/>
    </location>
</feature>
<feature type="modified residue" description="Phosphoserine" evidence="2">
    <location>
        <position position="186"/>
    </location>
</feature>
<organism>
    <name type="scientific">Rattus norvegicus</name>
    <name type="common">Rat</name>
    <dbReference type="NCBI Taxonomy" id="10116"/>
    <lineage>
        <taxon>Eukaryota</taxon>
        <taxon>Metazoa</taxon>
        <taxon>Chordata</taxon>
        <taxon>Craniata</taxon>
        <taxon>Vertebrata</taxon>
        <taxon>Euteleostomi</taxon>
        <taxon>Mammalia</taxon>
        <taxon>Eutheria</taxon>
        <taxon>Euarchontoglires</taxon>
        <taxon>Glires</taxon>
        <taxon>Rodentia</taxon>
        <taxon>Myomorpha</taxon>
        <taxon>Muroidea</taxon>
        <taxon>Muridae</taxon>
        <taxon>Murinae</taxon>
        <taxon>Rattus</taxon>
    </lineage>
</organism>
<reference key="1">
    <citation type="journal article" date="2004" name="Nature">
        <title>Genome sequence of the Brown Norway rat yields insights into mammalian evolution.</title>
        <authorList>
            <person name="Gibbs R.A."/>
            <person name="Weinstock G.M."/>
            <person name="Metzker M.L."/>
            <person name="Muzny D.M."/>
            <person name="Sodergren E.J."/>
            <person name="Scherer S."/>
            <person name="Scott G."/>
            <person name="Steffen D."/>
            <person name="Worley K.C."/>
            <person name="Burch P.E."/>
            <person name="Okwuonu G."/>
            <person name="Hines S."/>
            <person name="Lewis L."/>
            <person name="Deramo C."/>
            <person name="Delgado O."/>
            <person name="Dugan-Rocha S."/>
            <person name="Miner G."/>
            <person name="Morgan M."/>
            <person name="Hawes A."/>
            <person name="Gill R."/>
            <person name="Holt R.A."/>
            <person name="Adams M.D."/>
            <person name="Amanatides P.G."/>
            <person name="Baden-Tillson H."/>
            <person name="Barnstead M."/>
            <person name="Chin S."/>
            <person name="Evans C.A."/>
            <person name="Ferriera S."/>
            <person name="Fosler C."/>
            <person name="Glodek A."/>
            <person name="Gu Z."/>
            <person name="Jennings D."/>
            <person name="Kraft C.L."/>
            <person name="Nguyen T."/>
            <person name="Pfannkoch C.M."/>
            <person name="Sitter C."/>
            <person name="Sutton G.G."/>
            <person name="Venter J.C."/>
            <person name="Woodage T."/>
            <person name="Smith D."/>
            <person name="Lee H.-M."/>
            <person name="Gustafson E."/>
            <person name="Cahill P."/>
            <person name="Kana A."/>
            <person name="Doucette-Stamm L."/>
            <person name="Weinstock K."/>
            <person name="Fechtel K."/>
            <person name="Weiss R.B."/>
            <person name="Dunn D.M."/>
            <person name="Green E.D."/>
            <person name="Blakesley R.W."/>
            <person name="Bouffard G.G."/>
            <person name="De Jong P.J."/>
            <person name="Osoegawa K."/>
            <person name="Zhu B."/>
            <person name="Marra M."/>
            <person name="Schein J."/>
            <person name="Bosdet I."/>
            <person name="Fjell C."/>
            <person name="Jones S."/>
            <person name="Krzywinski M."/>
            <person name="Mathewson C."/>
            <person name="Siddiqui A."/>
            <person name="Wye N."/>
            <person name="McPherson J."/>
            <person name="Zhao S."/>
            <person name="Fraser C.M."/>
            <person name="Shetty J."/>
            <person name="Shatsman S."/>
            <person name="Geer K."/>
            <person name="Chen Y."/>
            <person name="Abramzon S."/>
            <person name="Nierman W.C."/>
            <person name="Havlak P.H."/>
            <person name="Chen R."/>
            <person name="Durbin K.J."/>
            <person name="Egan A."/>
            <person name="Ren Y."/>
            <person name="Song X.-Z."/>
            <person name="Li B."/>
            <person name="Liu Y."/>
            <person name="Qin X."/>
            <person name="Cawley S."/>
            <person name="Cooney A.J."/>
            <person name="D'Souza L.M."/>
            <person name="Martin K."/>
            <person name="Wu J.Q."/>
            <person name="Gonzalez-Garay M.L."/>
            <person name="Jackson A.R."/>
            <person name="Kalafus K.J."/>
            <person name="McLeod M.P."/>
            <person name="Milosavljevic A."/>
            <person name="Virk D."/>
            <person name="Volkov A."/>
            <person name="Wheeler D.A."/>
            <person name="Zhang Z."/>
            <person name="Bailey J.A."/>
            <person name="Eichler E.E."/>
            <person name="Tuzun E."/>
            <person name="Birney E."/>
            <person name="Mongin E."/>
            <person name="Ureta-Vidal A."/>
            <person name="Woodwark C."/>
            <person name="Zdobnov E."/>
            <person name="Bork P."/>
            <person name="Suyama M."/>
            <person name="Torrents D."/>
            <person name="Alexandersson M."/>
            <person name="Trask B.J."/>
            <person name="Young J.M."/>
            <person name="Huang H."/>
            <person name="Wang H."/>
            <person name="Xing H."/>
            <person name="Daniels S."/>
            <person name="Gietzen D."/>
            <person name="Schmidt J."/>
            <person name="Stevens K."/>
            <person name="Vitt U."/>
            <person name="Wingrove J."/>
            <person name="Camara F."/>
            <person name="Mar Alba M."/>
            <person name="Abril J.F."/>
            <person name="Guigo R."/>
            <person name="Smit A."/>
            <person name="Dubchak I."/>
            <person name="Rubin E.M."/>
            <person name="Couronne O."/>
            <person name="Poliakov A."/>
            <person name="Huebner N."/>
            <person name="Ganten D."/>
            <person name="Goesele C."/>
            <person name="Hummel O."/>
            <person name="Kreitler T."/>
            <person name="Lee Y.-A."/>
            <person name="Monti J."/>
            <person name="Schulz H."/>
            <person name="Zimdahl H."/>
            <person name="Himmelbauer H."/>
            <person name="Lehrach H."/>
            <person name="Jacob H.J."/>
            <person name="Bromberg S."/>
            <person name="Gullings-Handley J."/>
            <person name="Jensen-Seaman M.I."/>
            <person name="Kwitek A.E."/>
            <person name="Lazar J."/>
            <person name="Pasko D."/>
            <person name="Tonellato P.J."/>
            <person name="Twigger S."/>
            <person name="Ponting C.P."/>
            <person name="Duarte J.M."/>
            <person name="Rice S."/>
            <person name="Goodstadt L."/>
            <person name="Beatson S.A."/>
            <person name="Emes R.D."/>
            <person name="Winter E.E."/>
            <person name="Webber C."/>
            <person name="Brandt P."/>
            <person name="Nyakatura G."/>
            <person name="Adetobi M."/>
            <person name="Chiaromonte F."/>
            <person name="Elnitski L."/>
            <person name="Eswara P."/>
            <person name="Hardison R.C."/>
            <person name="Hou M."/>
            <person name="Kolbe D."/>
            <person name="Makova K."/>
            <person name="Miller W."/>
            <person name="Nekrutenko A."/>
            <person name="Riemer C."/>
            <person name="Schwartz S."/>
            <person name="Taylor J."/>
            <person name="Yang S."/>
            <person name="Zhang Y."/>
            <person name="Lindpaintner K."/>
            <person name="Andrews T.D."/>
            <person name="Caccamo M."/>
            <person name="Clamp M."/>
            <person name="Clarke L."/>
            <person name="Curwen V."/>
            <person name="Durbin R.M."/>
            <person name="Eyras E."/>
            <person name="Searle S.M."/>
            <person name="Cooper G.M."/>
            <person name="Batzoglou S."/>
            <person name="Brudno M."/>
            <person name="Sidow A."/>
            <person name="Stone E.A."/>
            <person name="Payseur B.A."/>
            <person name="Bourque G."/>
            <person name="Lopez-Otin C."/>
            <person name="Puente X.S."/>
            <person name="Chakrabarti K."/>
            <person name="Chatterji S."/>
            <person name="Dewey C."/>
            <person name="Pachter L."/>
            <person name="Bray N."/>
            <person name="Yap V.B."/>
            <person name="Caspi A."/>
            <person name="Tesler G."/>
            <person name="Pevzner P.A."/>
            <person name="Haussler D."/>
            <person name="Roskin K.M."/>
            <person name="Baertsch R."/>
            <person name="Clawson H."/>
            <person name="Furey T.S."/>
            <person name="Hinrichs A.S."/>
            <person name="Karolchik D."/>
            <person name="Kent W.J."/>
            <person name="Rosenbloom K.R."/>
            <person name="Trumbower H."/>
            <person name="Weirauch M."/>
            <person name="Cooper D.N."/>
            <person name="Stenson P.D."/>
            <person name="Ma B."/>
            <person name="Brent M."/>
            <person name="Arumugam M."/>
            <person name="Shteynberg D."/>
            <person name="Copley R.R."/>
            <person name="Taylor M.S."/>
            <person name="Riethman H."/>
            <person name="Mudunuri U."/>
            <person name="Peterson J."/>
            <person name="Guyer M."/>
            <person name="Felsenfeld A."/>
            <person name="Old S."/>
            <person name="Mockrin S."/>
            <person name="Collins F.S."/>
        </authorList>
    </citation>
    <scope>NUCLEOTIDE SEQUENCE [LARGE SCALE GENOMIC DNA]</scope>
    <source>
        <strain>Brown Norway</strain>
    </source>
</reference>
<reference key="2">
    <citation type="journal article" date="2012" name="J. Biol. Chem.">
        <title>Insights into role of bromodomain, testis-specific (Brdt) in acetylated histone H4-dependent chromatin remodeling in mammalian spermiogenesis.</title>
        <authorList>
            <person name="Dhar S."/>
            <person name="Thota A."/>
            <person name="Rao M.R."/>
        </authorList>
    </citation>
    <scope>SUBCELLULAR LOCATION</scope>
    <scope>DEVELOPMENTAL STAGE</scope>
    <scope>INTERACTION WITH SMARCE1</scope>
</reference>
<gene>
    <name type="primary">Brdt</name>
</gene>
<keyword id="KW-0010">Activator</keyword>
<keyword id="KW-0103">Bromodomain</keyword>
<keyword id="KW-0156">Chromatin regulator</keyword>
<keyword id="KW-0175">Coiled coil</keyword>
<keyword id="KW-0221">Differentiation</keyword>
<keyword id="KW-0469">Meiosis</keyword>
<keyword id="KW-0507">mRNA processing</keyword>
<keyword id="KW-0508">mRNA splicing</keyword>
<keyword id="KW-0539">Nucleus</keyword>
<keyword id="KW-0597">Phosphoprotein</keyword>
<keyword id="KW-1185">Reference proteome</keyword>
<keyword id="KW-0677">Repeat</keyword>
<keyword id="KW-0744">Spermatogenesis</keyword>
<keyword id="KW-0804">Transcription</keyword>
<keyword id="KW-0805">Transcription regulation</keyword>
<keyword id="KW-0832">Ubl conjugation</keyword>
<comment type="function">
    <text evidence="2">Testis-specific chromatin protein that specifically binds histone H4 acetylated at 'Lys-5' and 'Lys-8' (H4K5ac and H4K8ac, respectively) and plays a key role in spermatogenesis. Required in late pachytene spermatocytes: plays a role in meiotic and post-meiotic cells by binding to acetylated histones at the promoter of specific meiotic and post-meiotic genes, facilitating their activation at the appropriate time. In the post-meiotic phase of spermatogenesis, binds to hyperacetylated histones and participates in their general removal from DNA. Also recognizes and binds a subset of butyrylated histones: able to bind histone H4 butyrylated at 'Lys-8' (H4K8ac), while it is not able to bind H4 butyrylated at 'Lys-5' (H4K5ac). Also acts as a component of the splicing machinery in pachytene spermatocytes and round spermatids and participates in 3'-UTR truncation of specific mRNAs in post-meiotic spermatids. Required for chromocenter organization, a structure comprised of peri-centromeric heterochromatin.</text>
</comment>
<comment type="subunit">
    <text evidence="1 2 7">Interacts with the acetylated N-terminus of histone H1, H2, H3 and H4. Interacts with P-TEFb components CDK9 and CCNT1/cyclin-T1. Interacts with mRNA splicing machinery proteins SRSF2, DDX5, HNRNPK and TARDBP (By similarity). Interacts with SMARCE1 (PubMed:22215678).</text>
</comment>
<comment type="subcellular location">
    <subcellularLocation>
        <location evidence="7">Nucleus</location>
    </subcellularLocation>
    <text evidence="2">Detected on chromatin.</text>
</comment>
<comment type="developmental stage">
    <text evidence="7">Present in all stages of spermiogenesis, from round to elongating spermatids (at protein level).</text>
</comment>
<comment type="domain">
    <text evidence="2">Bromo domains mediate interaction with histones that have acetylated lysine residues at specific positions. Bromo domain 1 mediates binding with histone H4 acetylated at 'Lys-5' and 'Lys-8' (H4K5ac and H4K8ac, respectively). The bromo domains also recognize and bind a subset of butyrylated histones: able to bind histone H4 butyrylated at 'Lys-8' (H4K8ac), while it is not able to bind H4 butyrylated at 'Lys-5' (H4K5ac).</text>
</comment>
<comment type="PTM">
    <text evidence="2">Ubiquitinated in a SPOP-dependent manner, leading to proteasomal degradation.</text>
</comment>
<comment type="similarity">
    <text evidence="8">Belongs to the BET family.</text>
</comment>
<protein>
    <recommendedName>
        <fullName>Bromodomain testis-specific protein</fullName>
    </recommendedName>
</protein>
<name>BRDT_RAT</name>